<gene>
    <name evidence="1" type="primary">pyrB</name>
    <name type="ordered locus">P9301_02551</name>
</gene>
<feature type="chain" id="PRO_0000301602" description="Aspartate carbamoyltransferase catalytic subunit">
    <location>
        <begin position="1"/>
        <end position="338"/>
    </location>
</feature>
<feature type="binding site" evidence="1">
    <location>
        <position position="59"/>
    </location>
    <ligand>
        <name>carbamoyl phosphate</name>
        <dbReference type="ChEBI" id="CHEBI:58228"/>
    </ligand>
</feature>
<feature type="binding site" evidence="1">
    <location>
        <position position="60"/>
    </location>
    <ligand>
        <name>carbamoyl phosphate</name>
        <dbReference type="ChEBI" id="CHEBI:58228"/>
    </ligand>
</feature>
<feature type="binding site" evidence="1">
    <location>
        <position position="87"/>
    </location>
    <ligand>
        <name>L-aspartate</name>
        <dbReference type="ChEBI" id="CHEBI:29991"/>
    </ligand>
</feature>
<feature type="binding site" evidence="1">
    <location>
        <position position="109"/>
    </location>
    <ligand>
        <name>carbamoyl phosphate</name>
        <dbReference type="ChEBI" id="CHEBI:58228"/>
    </ligand>
</feature>
<feature type="binding site" evidence="1">
    <location>
        <position position="142"/>
    </location>
    <ligand>
        <name>carbamoyl phosphate</name>
        <dbReference type="ChEBI" id="CHEBI:58228"/>
    </ligand>
</feature>
<feature type="binding site" evidence="1">
    <location>
        <position position="145"/>
    </location>
    <ligand>
        <name>carbamoyl phosphate</name>
        <dbReference type="ChEBI" id="CHEBI:58228"/>
    </ligand>
</feature>
<feature type="binding site" evidence="1">
    <location>
        <position position="182"/>
    </location>
    <ligand>
        <name>L-aspartate</name>
        <dbReference type="ChEBI" id="CHEBI:29991"/>
    </ligand>
</feature>
<feature type="binding site" evidence="1">
    <location>
        <position position="253"/>
    </location>
    <ligand>
        <name>L-aspartate</name>
        <dbReference type="ChEBI" id="CHEBI:29991"/>
    </ligand>
</feature>
<feature type="binding site" evidence="1">
    <location>
        <position position="294"/>
    </location>
    <ligand>
        <name>carbamoyl phosphate</name>
        <dbReference type="ChEBI" id="CHEBI:58228"/>
    </ligand>
</feature>
<feature type="binding site" evidence="1">
    <location>
        <position position="295"/>
    </location>
    <ligand>
        <name>carbamoyl phosphate</name>
        <dbReference type="ChEBI" id="CHEBI:58228"/>
    </ligand>
</feature>
<organism>
    <name type="scientific">Prochlorococcus marinus (strain MIT 9301)</name>
    <dbReference type="NCBI Taxonomy" id="167546"/>
    <lineage>
        <taxon>Bacteria</taxon>
        <taxon>Bacillati</taxon>
        <taxon>Cyanobacteriota</taxon>
        <taxon>Cyanophyceae</taxon>
        <taxon>Synechococcales</taxon>
        <taxon>Prochlorococcaceae</taxon>
        <taxon>Prochlorococcus</taxon>
    </lineage>
</organism>
<keyword id="KW-0665">Pyrimidine biosynthesis</keyword>
<keyword id="KW-1185">Reference proteome</keyword>
<keyword id="KW-0808">Transferase</keyword>
<protein>
    <recommendedName>
        <fullName evidence="1">Aspartate carbamoyltransferase catalytic subunit</fullName>
        <ecNumber evidence="1">2.1.3.2</ecNumber>
    </recommendedName>
    <alternativeName>
        <fullName evidence="1">Aspartate transcarbamylase</fullName>
        <shortName evidence="1">ATCase</shortName>
    </alternativeName>
</protein>
<dbReference type="EC" id="2.1.3.2" evidence="1"/>
<dbReference type="EMBL" id="CP000576">
    <property type="protein sequence ID" value="ABO16878.1"/>
    <property type="molecule type" value="Genomic_DNA"/>
</dbReference>
<dbReference type="RefSeq" id="WP_011862276.1">
    <property type="nucleotide sequence ID" value="NC_009091.1"/>
</dbReference>
<dbReference type="SMR" id="A3PAV3"/>
<dbReference type="STRING" id="167546.P9301_02551"/>
<dbReference type="KEGG" id="pmg:P9301_02551"/>
<dbReference type="eggNOG" id="COG0540">
    <property type="taxonomic scope" value="Bacteria"/>
</dbReference>
<dbReference type="HOGENOM" id="CLU_043846_2_0_3"/>
<dbReference type="OrthoDB" id="9774690at2"/>
<dbReference type="UniPathway" id="UPA00070">
    <property type="reaction ID" value="UER00116"/>
</dbReference>
<dbReference type="Proteomes" id="UP000001430">
    <property type="component" value="Chromosome"/>
</dbReference>
<dbReference type="GO" id="GO:0005829">
    <property type="term" value="C:cytosol"/>
    <property type="evidence" value="ECO:0007669"/>
    <property type="project" value="TreeGrafter"/>
</dbReference>
<dbReference type="GO" id="GO:0016597">
    <property type="term" value="F:amino acid binding"/>
    <property type="evidence" value="ECO:0007669"/>
    <property type="project" value="InterPro"/>
</dbReference>
<dbReference type="GO" id="GO:0004070">
    <property type="term" value="F:aspartate carbamoyltransferase activity"/>
    <property type="evidence" value="ECO:0007669"/>
    <property type="project" value="UniProtKB-UniRule"/>
</dbReference>
<dbReference type="GO" id="GO:0006207">
    <property type="term" value="P:'de novo' pyrimidine nucleobase biosynthetic process"/>
    <property type="evidence" value="ECO:0007669"/>
    <property type="project" value="InterPro"/>
</dbReference>
<dbReference type="GO" id="GO:0044205">
    <property type="term" value="P:'de novo' UMP biosynthetic process"/>
    <property type="evidence" value="ECO:0007669"/>
    <property type="project" value="UniProtKB-UniRule"/>
</dbReference>
<dbReference type="GO" id="GO:0006520">
    <property type="term" value="P:amino acid metabolic process"/>
    <property type="evidence" value="ECO:0007669"/>
    <property type="project" value="InterPro"/>
</dbReference>
<dbReference type="Gene3D" id="3.40.50.1370">
    <property type="entry name" value="Aspartate/ornithine carbamoyltransferase"/>
    <property type="match status" value="2"/>
</dbReference>
<dbReference type="HAMAP" id="MF_00001">
    <property type="entry name" value="Asp_carb_tr"/>
    <property type="match status" value="1"/>
</dbReference>
<dbReference type="InterPro" id="IPR006132">
    <property type="entry name" value="Asp/Orn_carbamoyltranf_P-bd"/>
</dbReference>
<dbReference type="InterPro" id="IPR006130">
    <property type="entry name" value="Asp/Orn_carbamoylTrfase"/>
</dbReference>
<dbReference type="InterPro" id="IPR036901">
    <property type="entry name" value="Asp/Orn_carbamoylTrfase_sf"/>
</dbReference>
<dbReference type="InterPro" id="IPR002082">
    <property type="entry name" value="Asp_carbamoyltransf"/>
</dbReference>
<dbReference type="InterPro" id="IPR006131">
    <property type="entry name" value="Asp_carbamoyltransf_Asp/Orn-bd"/>
</dbReference>
<dbReference type="NCBIfam" id="TIGR00670">
    <property type="entry name" value="asp_carb_tr"/>
    <property type="match status" value="1"/>
</dbReference>
<dbReference type="NCBIfam" id="NF002032">
    <property type="entry name" value="PRK00856.1"/>
    <property type="match status" value="1"/>
</dbReference>
<dbReference type="PANTHER" id="PTHR45753:SF6">
    <property type="entry name" value="ASPARTATE CARBAMOYLTRANSFERASE"/>
    <property type="match status" value="1"/>
</dbReference>
<dbReference type="PANTHER" id="PTHR45753">
    <property type="entry name" value="ORNITHINE CARBAMOYLTRANSFERASE, MITOCHONDRIAL"/>
    <property type="match status" value="1"/>
</dbReference>
<dbReference type="Pfam" id="PF00185">
    <property type="entry name" value="OTCace"/>
    <property type="match status" value="1"/>
</dbReference>
<dbReference type="Pfam" id="PF02729">
    <property type="entry name" value="OTCace_N"/>
    <property type="match status" value="1"/>
</dbReference>
<dbReference type="PRINTS" id="PR00100">
    <property type="entry name" value="AOTCASE"/>
</dbReference>
<dbReference type="PRINTS" id="PR00101">
    <property type="entry name" value="ATCASE"/>
</dbReference>
<dbReference type="SUPFAM" id="SSF53671">
    <property type="entry name" value="Aspartate/ornithine carbamoyltransferase"/>
    <property type="match status" value="1"/>
</dbReference>
<dbReference type="PROSITE" id="PS00097">
    <property type="entry name" value="CARBAMOYLTRANSFERASE"/>
    <property type="match status" value="1"/>
</dbReference>
<comment type="function">
    <text evidence="1">Catalyzes the condensation of carbamoyl phosphate and aspartate to form carbamoyl aspartate and inorganic phosphate, the committed step in the de novo pyrimidine nucleotide biosynthesis pathway.</text>
</comment>
<comment type="catalytic activity">
    <reaction evidence="1">
        <text>carbamoyl phosphate + L-aspartate = N-carbamoyl-L-aspartate + phosphate + H(+)</text>
        <dbReference type="Rhea" id="RHEA:20013"/>
        <dbReference type="ChEBI" id="CHEBI:15378"/>
        <dbReference type="ChEBI" id="CHEBI:29991"/>
        <dbReference type="ChEBI" id="CHEBI:32814"/>
        <dbReference type="ChEBI" id="CHEBI:43474"/>
        <dbReference type="ChEBI" id="CHEBI:58228"/>
        <dbReference type="EC" id="2.1.3.2"/>
    </reaction>
</comment>
<comment type="pathway">
    <text evidence="1">Pyrimidine metabolism; UMP biosynthesis via de novo pathway; (S)-dihydroorotate from bicarbonate: step 2/3.</text>
</comment>
<comment type="subunit">
    <text evidence="1">Heterododecamer (2C3:3R2) of six catalytic PyrB chains organized as two trimers (C3), and six regulatory PyrI chains organized as three dimers (R2).</text>
</comment>
<comment type="similarity">
    <text evidence="1">Belongs to the aspartate/ornithine carbamoyltransferase superfamily. ATCase family.</text>
</comment>
<accession>A3PAV3</accession>
<evidence type="ECO:0000255" key="1">
    <source>
        <dbReference type="HAMAP-Rule" id="MF_00001"/>
    </source>
</evidence>
<sequence>MQIWPHKHIHSLANFSIKDYESVFELANRFDALKNSGTKKIPALQGTLVTSLFFEPSTRTKNSFELAAKRLSADVQTFAPSSSSLTKGETIIDTAITYSAMGADTLVIRHSSSYITFEIAEKLDAINSKTSVLNAGDGLHSHPSQGLLDIYTLIKFFSKNTLNPGVLNSKKILIIGDVNHSRVARSNLWALSAFGADIILCGPETLIPDEFTNFLKTPAPNQIEDPVKSRGCITISRSLEESIKIADAIIVLRLQKERMMENLLSSIDSYSLDYGLTSEKLSLNNKEIPILHPGPINRDIEISSKVVDQYPNCLINNQVSNGIPIRMALLYLLQKNNQ</sequence>
<reference key="1">
    <citation type="journal article" date="2007" name="PLoS Genet.">
        <title>Patterns and implications of gene gain and loss in the evolution of Prochlorococcus.</title>
        <authorList>
            <person name="Kettler G.C."/>
            <person name="Martiny A.C."/>
            <person name="Huang K."/>
            <person name="Zucker J."/>
            <person name="Coleman M.L."/>
            <person name="Rodrigue S."/>
            <person name="Chen F."/>
            <person name="Lapidus A."/>
            <person name="Ferriera S."/>
            <person name="Johnson J."/>
            <person name="Steglich C."/>
            <person name="Church G.M."/>
            <person name="Richardson P."/>
            <person name="Chisholm S.W."/>
        </authorList>
    </citation>
    <scope>NUCLEOTIDE SEQUENCE [LARGE SCALE GENOMIC DNA]</scope>
    <source>
        <strain>MIT 9301</strain>
    </source>
</reference>
<name>PYRB_PROM0</name>
<proteinExistence type="inferred from homology"/>